<keyword id="KW-0067">ATP-binding</keyword>
<keyword id="KW-0963">Cytoplasm</keyword>
<keyword id="KW-0378">Hydrolase</keyword>
<keyword id="KW-0472">Membrane</keyword>
<keyword id="KW-0547">Nucleotide-binding</keyword>
<keyword id="KW-0576">Peroxisome</keyword>
<keyword id="KW-0962">Peroxisome biogenesis</keyword>
<keyword id="KW-0597">Phosphoprotein</keyword>
<keyword id="KW-0653">Protein transport</keyword>
<keyword id="KW-1185">Reference proteome</keyword>
<keyword id="KW-0677">Repeat</keyword>
<keyword id="KW-0813">Transport</keyword>
<feature type="chain" id="PRO_0000456979" description="Peroxisomal ATPase PEX1">
    <location>
        <begin position="1"/>
        <end position="1285"/>
    </location>
</feature>
<feature type="region of interest" description="Disordered" evidence="3">
    <location>
        <begin position="344"/>
        <end position="373"/>
    </location>
</feature>
<feature type="region of interest" description="Disordered" evidence="3">
    <location>
        <begin position="1142"/>
        <end position="1162"/>
    </location>
</feature>
<feature type="region of interest" description="Disordered" evidence="3">
    <location>
        <begin position="1262"/>
        <end position="1285"/>
    </location>
</feature>
<feature type="compositionally biased region" description="Polar residues" evidence="3">
    <location>
        <begin position="344"/>
        <end position="353"/>
    </location>
</feature>
<feature type="compositionally biased region" description="Basic and acidic residues" evidence="3">
    <location>
        <begin position="355"/>
        <end position="373"/>
    </location>
</feature>
<feature type="compositionally biased region" description="Polar residues" evidence="3">
    <location>
        <begin position="1142"/>
        <end position="1161"/>
    </location>
</feature>
<feature type="binding site" evidence="2">
    <location>
        <begin position="601"/>
        <end position="608"/>
    </location>
    <ligand>
        <name>ATP</name>
        <dbReference type="ChEBI" id="CHEBI:30616"/>
    </ligand>
</feature>
<feature type="binding site" evidence="2">
    <location>
        <begin position="883"/>
        <end position="890"/>
    </location>
    <ligand>
        <name>ATP</name>
        <dbReference type="ChEBI" id="CHEBI:30616"/>
    </ligand>
</feature>
<feature type="modified residue" description="Phosphoserine" evidence="1">
    <location>
        <position position="354"/>
    </location>
</feature>
<feature type="modified residue" description="Phosphoserine" evidence="1">
    <location>
        <position position="1183"/>
    </location>
</feature>
<feature type="modified residue" description="Phosphoserine" evidence="1">
    <location>
        <position position="1211"/>
    </location>
</feature>
<feature type="modified residue" description="Phosphoserine" evidence="1">
    <location>
        <position position="1213"/>
    </location>
</feature>
<accession>G3GXG9</accession>
<evidence type="ECO:0000250" key="1">
    <source>
        <dbReference type="UniProtKB" id="O43933"/>
    </source>
</evidence>
<evidence type="ECO:0000255" key="2"/>
<evidence type="ECO:0000256" key="3">
    <source>
        <dbReference type="SAM" id="MobiDB-lite"/>
    </source>
</evidence>
<evidence type="ECO:0000269" key="4">
    <source>
    </source>
</evidence>
<evidence type="ECO:0000269" key="5">
    <source>
    </source>
</evidence>
<evidence type="ECO:0000303" key="6">
    <source>
    </source>
</evidence>
<evidence type="ECO:0000305" key="7"/>
<evidence type="ECO:0000312" key="8">
    <source>
        <dbReference type="EMBL" id="EGV95707.1"/>
    </source>
</evidence>
<reference key="1">
    <citation type="journal article" date="2011" name="Nat. Biotechnol.">
        <title>The genomic sequence of the Chinese hamster ovary (CHO)-K1 cell line.</title>
        <authorList>
            <person name="Xu X."/>
            <person name="Nagarajan H."/>
            <person name="Lewis N.E."/>
            <person name="Pan S."/>
            <person name="Cai Z."/>
            <person name="Liu X."/>
            <person name="Chen W."/>
            <person name="Xie M."/>
            <person name="Wang W."/>
            <person name="Hammond S."/>
            <person name="Andersen M.R."/>
            <person name="Neff N."/>
            <person name="Passarelli B."/>
            <person name="Koh W."/>
            <person name="Fan H.C."/>
            <person name="Wang J."/>
            <person name="Gui Y."/>
            <person name="Lee K.H."/>
            <person name="Betenbaugh M.J."/>
            <person name="Quake S.R."/>
            <person name="Famili I."/>
            <person name="Palsson B.O."/>
            <person name="Wang J."/>
        </authorList>
    </citation>
    <scope>NUCLEOTIDE SEQUENCE [LARGE SCALE GENOMIC DNA]</scope>
</reference>
<reference key="2">
    <citation type="journal article" date="1998" name="Proc. Natl. Acad. Sci. U.S.A.">
        <title>Human PEX1 cloned by functional complementation on a CHO cell mutant is responsible for peroxisome-deficient Zellweger syndrome of complementation group I.</title>
        <authorList>
            <person name="Tamura S."/>
            <person name="Okumoto K."/>
            <person name="Toyama R."/>
            <person name="Shimozawa N."/>
            <person name="Tsukamoto T."/>
            <person name="Suzuki Y."/>
            <person name="Osumi T."/>
            <person name="Kondo N."/>
            <person name="Fujiki Y."/>
        </authorList>
    </citation>
    <scope>FUNCTION</scope>
</reference>
<reference key="3">
    <citation type="journal article" date="2011" name="Traffic">
        <title>Recruiting mechanism of the AAA peroxins, Pex1p and Pex6p, to Pex26p on the peroxisomal membrane.</title>
        <authorList>
            <person name="Nashiro C."/>
            <person name="Kashiwagi A."/>
            <person name="Matsuzaki T."/>
            <person name="Tamura S."/>
            <person name="Fujiki Y."/>
        </authorList>
    </citation>
    <scope>FUNCTION</scope>
</reference>
<dbReference type="EC" id="3.6.4.-" evidence="1"/>
<dbReference type="EMBL" id="JH000059">
    <property type="protein sequence ID" value="EGV95707.1"/>
    <property type="status" value="ALT_SEQ"/>
    <property type="molecule type" value="Genomic_DNA"/>
</dbReference>
<dbReference type="SMR" id="G3GXG9"/>
<dbReference type="FunCoup" id="G3GXG9">
    <property type="interactions" value="2885"/>
</dbReference>
<dbReference type="STRING" id="10029.G3GXG9"/>
<dbReference type="PaxDb" id="10029-XP_007607938.1"/>
<dbReference type="eggNOG" id="KOG0735">
    <property type="taxonomic scope" value="Eukaryota"/>
</dbReference>
<dbReference type="InParanoid" id="G3GXG9"/>
<dbReference type="Proteomes" id="UP000001075">
    <property type="component" value="Unassembled WGS sequence"/>
</dbReference>
<dbReference type="Proteomes" id="UP000694386">
    <property type="component" value="Unplaced"/>
</dbReference>
<dbReference type="Proteomes" id="UP001108280">
    <property type="component" value="Unplaced"/>
</dbReference>
<dbReference type="GO" id="GO:0005829">
    <property type="term" value="C:cytosol"/>
    <property type="evidence" value="ECO:0007669"/>
    <property type="project" value="UniProtKB-SubCell"/>
</dbReference>
<dbReference type="GO" id="GO:0005778">
    <property type="term" value="C:peroxisomal membrane"/>
    <property type="evidence" value="ECO:0000250"/>
    <property type="project" value="UniProtKB"/>
</dbReference>
<dbReference type="GO" id="GO:0005524">
    <property type="term" value="F:ATP binding"/>
    <property type="evidence" value="ECO:0007669"/>
    <property type="project" value="UniProtKB-KW"/>
</dbReference>
<dbReference type="GO" id="GO:0016887">
    <property type="term" value="F:ATP hydrolysis activity"/>
    <property type="evidence" value="ECO:0007669"/>
    <property type="project" value="InterPro"/>
</dbReference>
<dbReference type="GO" id="GO:0140318">
    <property type="term" value="F:protein transporter activity"/>
    <property type="evidence" value="ECO:0000250"/>
    <property type="project" value="UniProtKB"/>
</dbReference>
<dbReference type="GO" id="GO:0140036">
    <property type="term" value="F:ubiquitin-modified protein reader activity"/>
    <property type="evidence" value="ECO:0000250"/>
    <property type="project" value="UniProtKB"/>
</dbReference>
<dbReference type="GO" id="GO:0016562">
    <property type="term" value="P:protein import into peroxisome matrix, receptor recycling"/>
    <property type="evidence" value="ECO:0000250"/>
    <property type="project" value="UniProtKB"/>
</dbReference>
<dbReference type="GO" id="GO:0043335">
    <property type="term" value="P:protein unfolding"/>
    <property type="evidence" value="ECO:0000250"/>
    <property type="project" value="UniProtKB"/>
</dbReference>
<dbReference type="CDD" id="cd00009">
    <property type="entry name" value="AAA"/>
    <property type="match status" value="1"/>
</dbReference>
<dbReference type="CDD" id="cd19526">
    <property type="entry name" value="RecA-like_PEX1_r2"/>
    <property type="match status" value="1"/>
</dbReference>
<dbReference type="FunFam" id="1.10.8.60:FF:000067">
    <property type="entry name" value="Peroxisomal biogenesis factor 1"/>
    <property type="match status" value="1"/>
</dbReference>
<dbReference type="FunFam" id="1.10.8.60:FF:000089">
    <property type="entry name" value="Peroxisomal biogenesis factor 1"/>
    <property type="match status" value="1"/>
</dbReference>
<dbReference type="FunFam" id="3.40.50.300:FF:000966">
    <property type="entry name" value="Peroxisomal biogenesis factor 1"/>
    <property type="match status" value="1"/>
</dbReference>
<dbReference type="FunFam" id="3.40.50.300:FF:001852">
    <property type="entry name" value="Peroxisomal biogenesis factor 1"/>
    <property type="match status" value="1"/>
</dbReference>
<dbReference type="FunFam" id="3.10.330.10:FF:000004">
    <property type="entry name" value="Peroxisome biogenesis factor 1"/>
    <property type="match status" value="1"/>
</dbReference>
<dbReference type="FunFam" id="2.40.40.20:FF:000016">
    <property type="entry name" value="peroxisome biogenesis factor 1"/>
    <property type="match status" value="1"/>
</dbReference>
<dbReference type="Gene3D" id="1.10.8.60">
    <property type="match status" value="2"/>
</dbReference>
<dbReference type="Gene3D" id="2.40.40.20">
    <property type="match status" value="1"/>
</dbReference>
<dbReference type="Gene3D" id="3.10.330.10">
    <property type="match status" value="1"/>
</dbReference>
<dbReference type="Gene3D" id="3.40.50.300">
    <property type="entry name" value="P-loop containing nucleotide triphosphate hydrolases"/>
    <property type="match status" value="2"/>
</dbReference>
<dbReference type="InterPro" id="IPR003593">
    <property type="entry name" value="AAA+_ATPase"/>
</dbReference>
<dbReference type="InterPro" id="IPR050168">
    <property type="entry name" value="AAA_ATPase_domain"/>
</dbReference>
<dbReference type="InterPro" id="IPR041569">
    <property type="entry name" value="AAA_lid_3"/>
</dbReference>
<dbReference type="InterPro" id="IPR009010">
    <property type="entry name" value="Asp_de-COase-like_dom_sf"/>
</dbReference>
<dbReference type="InterPro" id="IPR003959">
    <property type="entry name" value="ATPase_AAA_core"/>
</dbReference>
<dbReference type="InterPro" id="IPR003960">
    <property type="entry name" value="ATPase_AAA_CS"/>
</dbReference>
<dbReference type="InterPro" id="IPR029067">
    <property type="entry name" value="CDC48_domain_2-like_sf"/>
</dbReference>
<dbReference type="InterPro" id="IPR027417">
    <property type="entry name" value="P-loop_NTPase"/>
</dbReference>
<dbReference type="InterPro" id="IPR015343">
    <property type="entry name" value="PEX1-N-lobe"/>
</dbReference>
<dbReference type="InterPro" id="IPR015342">
    <property type="entry name" value="PEX1-N_C-lobe"/>
</dbReference>
<dbReference type="PANTHER" id="PTHR23077">
    <property type="entry name" value="AAA-FAMILY ATPASE"/>
    <property type="match status" value="1"/>
</dbReference>
<dbReference type="PANTHER" id="PTHR23077:SF12">
    <property type="entry name" value="PEROXISOMAL ATPASE PEX1"/>
    <property type="match status" value="1"/>
</dbReference>
<dbReference type="Pfam" id="PF00004">
    <property type="entry name" value="AAA"/>
    <property type="match status" value="2"/>
</dbReference>
<dbReference type="Pfam" id="PF17862">
    <property type="entry name" value="AAA_lid_3"/>
    <property type="match status" value="1"/>
</dbReference>
<dbReference type="Pfam" id="PF09262">
    <property type="entry name" value="PEX-1N"/>
    <property type="match status" value="1"/>
</dbReference>
<dbReference type="Pfam" id="PF09263">
    <property type="entry name" value="PEX-2N"/>
    <property type="match status" value="1"/>
</dbReference>
<dbReference type="SMART" id="SM00382">
    <property type="entry name" value="AAA"/>
    <property type="match status" value="2"/>
</dbReference>
<dbReference type="SUPFAM" id="SSF50692">
    <property type="entry name" value="ADC-like"/>
    <property type="match status" value="1"/>
</dbReference>
<dbReference type="SUPFAM" id="SSF54585">
    <property type="entry name" value="Cdc48 domain 2-like"/>
    <property type="match status" value="1"/>
</dbReference>
<dbReference type="SUPFAM" id="SSF52540">
    <property type="entry name" value="P-loop containing nucleoside triphosphate hydrolases"/>
    <property type="match status" value="2"/>
</dbReference>
<dbReference type="PROSITE" id="PS00674">
    <property type="entry name" value="AAA"/>
    <property type="match status" value="1"/>
</dbReference>
<comment type="function">
    <text evidence="1 4 5">Component of the PEX1-PEX6 AAA ATPase complex, a protein dislocase complex that mediates the ATP-dependent extraction of the PEX5 receptor from peroxisomal membranes, an essential step for PEX5 recycling (PubMed:21362118, PubMed:9539740). Specifically recognizes PEX5 monoubiquitinated at 'Cys-11', and pulls it out of the peroxisome lumen through the PEX2-PEX10-PEX12 retrotranslocation channel. Extraction by the PEX1-PEX6 AAA ATPase complex is accompanied by unfolding of the TPR repeats and release of bound cargo from PEX5 (By similarity).</text>
</comment>
<comment type="catalytic activity">
    <reaction evidence="1">
        <text>ATP + H2O = ADP + phosphate + H(+)</text>
        <dbReference type="Rhea" id="RHEA:13065"/>
        <dbReference type="ChEBI" id="CHEBI:15377"/>
        <dbReference type="ChEBI" id="CHEBI:15378"/>
        <dbReference type="ChEBI" id="CHEBI:30616"/>
        <dbReference type="ChEBI" id="CHEBI:43474"/>
        <dbReference type="ChEBI" id="CHEBI:456216"/>
    </reaction>
    <physiologicalReaction direction="left-to-right" evidence="1">
        <dbReference type="Rhea" id="RHEA:13066"/>
    </physiologicalReaction>
</comment>
<comment type="subunit">
    <text evidence="1">Homooligomer; homooligomerizes in the cytosol, interaction with PEX6 promotes dissociation of the homooligomer. Interacts with PEX6; forming the PEX1-PEX6 AAA ATPase complex, which is composed of a heterohexamer formed by a trimer of PEX1-PEX6 dimers. Interacts indirectly with PEX26, via its interaction with PEX6.</text>
</comment>
<comment type="subcellular location">
    <subcellularLocation>
        <location evidence="1">Cytoplasm</location>
        <location evidence="1">Cytosol</location>
    </subcellularLocation>
    <subcellularLocation>
        <location evidence="1">Peroxisome membrane</location>
    </subcellularLocation>
    <text evidence="1">Associated with peroxisomal membranes; anchored by PEX26 to peroxisome membranes.</text>
</comment>
<comment type="similarity">
    <text evidence="7">Belongs to the AAA ATPase family.</text>
</comment>
<comment type="sequence caution" evidence="7">
    <conflict type="erroneous gene model prediction">
        <sequence resource="EMBL-CDS" id="EGV95707"/>
    </conflict>
</comment>
<protein>
    <recommendedName>
        <fullName evidence="7">Peroxisomal ATPase PEX1</fullName>
        <ecNumber evidence="1">3.6.4.-</ecNumber>
    </recommendedName>
    <alternativeName>
        <fullName evidence="7">Peroxin-1</fullName>
    </alternativeName>
    <alternativeName>
        <fullName>Peroxisome biogenesis factor 1</fullName>
    </alternativeName>
</protein>
<organism>
    <name type="scientific">Cricetulus griseus</name>
    <name type="common">Chinese hamster</name>
    <name type="synonym">Cricetulus barabensis griseus</name>
    <dbReference type="NCBI Taxonomy" id="10029"/>
    <lineage>
        <taxon>Eukaryota</taxon>
        <taxon>Metazoa</taxon>
        <taxon>Chordata</taxon>
        <taxon>Craniata</taxon>
        <taxon>Vertebrata</taxon>
        <taxon>Euteleostomi</taxon>
        <taxon>Mammalia</taxon>
        <taxon>Eutheria</taxon>
        <taxon>Euarchontoglires</taxon>
        <taxon>Glires</taxon>
        <taxon>Rodentia</taxon>
        <taxon>Myomorpha</taxon>
        <taxon>Muroidea</taxon>
        <taxon>Cricetidae</taxon>
        <taxon>Cricetinae</taxon>
        <taxon>Cricetulus</taxon>
    </lineage>
</organism>
<sequence length="1285" mass="142122">MWSGDRSAAAGSGGAVVTVAFTNARDCFLRLPRRLVAQLHLLQNQAIEVTWDRQPTYLSWVEGRHFNDQGENVAEINRQVGQKLGLCSGEQVFLRPCSHVVSCQQVEVEPLSADDWEILELHAVSLEQHLLDQIRIVFPKAVVPIWVDQQTYIFIQIVALMPAVPYGRLETNTELLIQPKTRQAKENTFPKAGDAHGQFRSYGQEQKGMSKELQTKQLHMNTEGIPGSNETDPKVPSDSSWKAHWWTMLGSMFSLGPDNRQATSWGSSEISVFKTMQSQDVPLDSVFRVCRVQPPSVRDTPATSVFHKHCTVHVFPWDQEYFDVEPSFTVTYGKLVKLCSPKQQQGKTKQSVMSPEKEKHPLESPNHKQIGSDHTEEAGEACVLKVVWNGLEELKNTTKFTKSIEPLHLGKVWIPDDLRKRLNVEMHAVVRITPLETTPKIPRSLKLQPRENLPEDVSEDDVRTGFSSWLQQSATTMLPLVISKEERIKLGIKDGLKEFSLSVVHCQEREKGRGETAFVLSAVLLRKISVQVLLEPMIREENSEEIDFLLPFLKLNSLGGVNSLGVSAMEHITHSLLGRPLSRQLMSLVAGLRNGALLVTGGKGSGKSTLAKAICQEACDGLDAHVEIVDCKALRGKRLESIQKALEVAFSEAAWRQPSVILLDDLDFIAGLPTVPEQEHSPEAVQSQRLAHALKDMIKELVSVGSLIALIATSQSQCCLQPLLVSAQGIHTFQCVQHIQPPNQEQRCEILQNVVKNKLGCNINKSSDIDLQRIAKETEGFVARDFTVLVDRAIHSHLSRQPVSTREELTLTTSDFHKALHGFLPASLRNVNLHKPRDLGWDKIGGLHEVRQILMDTIQLPAKYPELFANLPIRQRTGILLYGPPGTGKTLLAGVVARESGMNFISIKGPELLSKYIGASEQAVRDVFTRAQAAKPCILFFDEFESIAPRRGHDNTGVTDRVVNQLLTQLDGVEGLQGVYVLAATSRPDLIDPALLRPGRLDKCVYCPPPDQVSRLEILNVLSASLPLAGDVDLQHMASVTESFTGADLKALLYNAQLEALQGRLLPGGLHDGGSSSDSDLSLSSMVFLNHSSGSDDSAADGESGLDQSLVSLEMSEILPDESKFNMYRLYFGSSYESELGNGTSSDLSSQCPSAPSSVTQDFPAAPGKEPLFTQHPMFRTPSQEGYQELTQEQRDQLKAEISIIKGRYQSQSGEDESLSQPGPIKTSFAISQAHLMTALAHTRPSISEEEEKDFAELYENFQNPKKRKNPSGTVFRPGQKVTLA</sequence>
<proteinExistence type="inferred from homology"/>
<gene>
    <name evidence="6" type="primary">PEX1</name>
    <name evidence="8" type="ORF">I79_002460</name>
</gene>
<name>PEX1_CRIGR</name>